<evidence type="ECO:0000255" key="1">
    <source>
        <dbReference type="HAMAP-Rule" id="MF_00001"/>
    </source>
</evidence>
<sequence length="301" mass="34385">MLTMSELSEVEISEILKDAEDFANGKESKTTEQTFVANLFFENSTRTRFSFEVAEKRLGLDVLNFSADASSVQKGETLYDTIRTLESIGTKAVVIRHEQDRYFDELKDQVNIPILNAGDGCGNHPTQCLLDLLTIKQEFGRFEGLKIAIVGDVRHSRVARSNAEALTKLGATIYFASPEEWKDEDNTFGTYKPLDELVPEVDVMMLLRVQHERHDHYETDIMKEYHEKHGLTVEREKRMKEGSIIMHPAPVNRDVEIASELVECERSRIFKQMENGVYVRMAVLKRALPNVLGGMKHELFV</sequence>
<comment type="function">
    <text evidence="1">Catalyzes the condensation of carbamoyl phosphate and aspartate to form carbamoyl aspartate and inorganic phosphate, the committed step in the de novo pyrimidine nucleotide biosynthesis pathway.</text>
</comment>
<comment type="catalytic activity">
    <reaction evidence="1">
        <text>carbamoyl phosphate + L-aspartate = N-carbamoyl-L-aspartate + phosphate + H(+)</text>
        <dbReference type="Rhea" id="RHEA:20013"/>
        <dbReference type="ChEBI" id="CHEBI:15378"/>
        <dbReference type="ChEBI" id="CHEBI:29991"/>
        <dbReference type="ChEBI" id="CHEBI:32814"/>
        <dbReference type="ChEBI" id="CHEBI:43474"/>
        <dbReference type="ChEBI" id="CHEBI:58228"/>
        <dbReference type="EC" id="2.1.3.2"/>
    </reaction>
</comment>
<comment type="pathway">
    <text evidence="1">Pyrimidine metabolism; UMP biosynthesis via de novo pathway; (S)-dihydroorotate from bicarbonate: step 2/3.</text>
</comment>
<comment type="subunit">
    <text evidence="1">Heterododecamer (2C3:3R2) of six catalytic PyrB chains organized as two trimers (C3), and six regulatory PyrI chains organized as three dimers (R2).</text>
</comment>
<comment type="similarity">
    <text evidence="1">Belongs to the aspartate/ornithine carbamoyltransferase superfamily. ATCase family.</text>
</comment>
<feature type="chain" id="PRO_0000113092" description="Aspartate carbamoyltransferase catalytic subunit">
    <location>
        <begin position="1"/>
        <end position="301"/>
    </location>
</feature>
<feature type="binding site" evidence="1">
    <location>
        <position position="46"/>
    </location>
    <ligand>
        <name>carbamoyl phosphate</name>
        <dbReference type="ChEBI" id="CHEBI:58228"/>
    </ligand>
</feature>
<feature type="binding site" evidence="1">
    <location>
        <position position="47"/>
    </location>
    <ligand>
        <name>carbamoyl phosphate</name>
        <dbReference type="ChEBI" id="CHEBI:58228"/>
    </ligand>
</feature>
<feature type="binding site" evidence="1">
    <location>
        <position position="74"/>
    </location>
    <ligand>
        <name>L-aspartate</name>
        <dbReference type="ChEBI" id="CHEBI:29991"/>
    </ligand>
</feature>
<feature type="binding site" evidence="1">
    <location>
        <position position="96"/>
    </location>
    <ligand>
        <name>carbamoyl phosphate</name>
        <dbReference type="ChEBI" id="CHEBI:58228"/>
    </ligand>
</feature>
<feature type="binding site" evidence="1">
    <location>
        <position position="124"/>
    </location>
    <ligand>
        <name>carbamoyl phosphate</name>
        <dbReference type="ChEBI" id="CHEBI:58228"/>
    </ligand>
</feature>
<feature type="binding site" evidence="1">
    <location>
        <position position="127"/>
    </location>
    <ligand>
        <name>carbamoyl phosphate</name>
        <dbReference type="ChEBI" id="CHEBI:58228"/>
    </ligand>
</feature>
<feature type="binding site" evidence="1">
    <location>
        <position position="157"/>
    </location>
    <ligand>
        <name>L-aspartate</name>
        <dbReference type="ChEBI" id="CHEBI:29991"/>
    </ligand>
</feature>
<feature type="binding site" evidence="1">
    <location>
        <position position="208"/>
    </location>
    <ligand>
        <name>L-aspartate</name>
        <dbReference type="ChEBI" id="CHEBI:29991"/>
    </ligand>
</feature>
<feature type="binding site" evidence="1">
    <location>
        <position position="249"/>
    </location>
    <ligand>
        <name>carbamoyl phosphate</name>
        <dbReference type="ChEBI" id="CHEBI:58228"/>
    </ligand>
</feature>
<feature type="binding site" evidence="1">
    <location>
        <position position="250"/>
    </location>
    <ligand>
        <name>carbamoyl phosphate</name>
        <dbReference type="ChEBI" id="CHEBI:58228"/>
    </ligand>
</feature>
<gene>
    <name evidence="1" type="primary">pyrB</name>
    <name type="ordered locus">BC_3889</name>
</gene>
<keyword id="KW-0665">Pyrimidine biosynthesis</keyword>
<keyword id="KW-1185">Reference proteome</keyword>
<keyword id="KW-0808">Transferase</keyword>
<organism>
    <name type="scientific">Bacillus cereus (strain ATCC 14579 / DSM 31 / CCUG 7414 / JCM 2152 / NBRC 15305 / NCIMB 9373 / NCTC 2599 / NRRL B-3711)</name>
    <dbReference type="NCBI Taxonomy" id="226900"/>
    <lineage>
        <taxon>Bacteria</taxon>
        <taxon>Bacillati</taxon>
        <taxon>Bacillota</taxon>
        <taxon>Bacilli</taxon>
        <taxon>Bacillales</taxon>
        <taxon>Bacillaceae</taxon>
        <taxon>Bacillus</taxon>
        <taxon>Bacillus cereus group</taxon>
    </lineage>
</organism>
<protein>
    <recommendedName>
        <fullName evidence="1">Aspartate carbamoyltransferase catalytic subunit</fullName>
        <ecNumber evidence="1">2.1.3.2</ecNumber>
    </recommendedName>
    <alternativeName>
        <fullName evidence="1">Aspartate transcarbamylase</fullName>
        <shortName evidence="1">ATCase</shortName>
    </alternativeName>
</protein>
<proteinExistence type="inferred from homology"/>
<reference key="1">
    <citation type="journal article" date="2003" name="Nature">
        <title>Genome sequence of Bacillus cereus and comparative analysis with Bacillus anthracis.</title>
        <authorList>
            <person name="Ivanova N."/>
            <person name="Sorokin A."/>
            <person name="Anderson I."/>
            <person name="Galleron N."/>
            <person name="Candelon B."/>
            <person name="Kapatral V."/>
            <person name="Bhattacharyya A."/>
            <person name="Reznik G."/>
            <person name="Mikhailova N."/>
            <person name="Lapidus A."/>
            <person name="Chu L."/>
            <person name="Mazur M."/>
            <person name="Goltsman E."/>
            <person name="Larsen N."/>
            <person name="D'Souza M."/>
            <person name="Walunas T."/>
            <person name="Grechkin Y."/>
            <person name="Pusch G."/>
            <person name="Haselkorn R."/>
            <person name="Fonstein M."/>
            <person name="Ehrlich S.D."/>
            <person name="Overbeek R."/>
            <person name="Kyrpides N.C."/>
        </authorList>
    </citation>
    <scope>NUCLEOTIDE SEQUENCE [LARGE SCALE GENOMIC DNA]</scope>
    <source>
        <strain>ATCC 14579 / DSM 31 / CCUG 7414 / JCM 2152 / NBRC 15305 / NCIMB 9373 / NCTC 2599 / NRRL B-3711</strain>
    </source>
</reference>
<accession>Q819S0</accession>
<dbReference type="EC" id="2.1.3.2" evidence="1"/>
<dbReference type="EMBL" id="AE016877">
    <property type="protein sequence ID" value="AAP10810.1"/>
    <property type="molecule type" value="Genomic_DNA"/>
</dbReference>
<dbReference type="RefSeq" id="NP_833609.1">
    <property type="nucleotide sequence ID" value="NC_004722.1"/>
</dbReference>
<dbReference type="SMR" id="Q819S0"/>
<dbReference type="STRING" id="226900.BC_3889"/>
<dbReference type="KEGG" id="bce:BC3889"/>
<dbReference type="PATRIC" id="fig|226900.8.peg.4011"/>
<dbReference type="HOGENOM" id="CLU_043846_2_1_9"/>
<dbReference type="UniPathway" id="UPA00070">
    <property type="reaction ID" value="UER00116"/>
</dbReference>
<dbReference type="Proteomes" id="UP000001417">
    <property type="component" value="Chromosome"/>
</dbReference>
<dbReference type="GO" id="GO:0016597">
    <property type="term" value="F:amino acid binding"/>
    <property type="evidence" value="ECO:0007669"/>
    <property type="project" value="InterPro"/>
</dbReference>
<dbReference type="GO" id="GO:0004070">
    <property type="term" value="F:aspartate carbamoyltransferase activity"/>
    <property type="evidence" value="ECO:0007669"/>
    <property type="project" value="UniProtKB-UniRule"/>
</dbReference>
<dbReference type="GO" id="GO:0006207">
    <property type="term" value="P:'de novo' pyrimidine nucleobase biosynthetic process"/>
    <property type="evidence" value="ECO:0007669"/>
    <property type="project" value="InterPro"/>
</dbReference>
<dbReference type="GO" id="GO:0044205">
    <property type="term" value="P:'de novo' UMP biosynthetic process"/>
    <property type="evidence" value="ECO:0007669"/>
    <property type="project" value="UniProtKB-UniRule"/>
</dbReference>
<dbReference type="GO" id="GO:0006520">
    <property type="term" value="P:amino acid metabolic process"/>
    <property type="evidence" value="ECO:0007669"/>
    <property type="project" value="InterPro"/>
</dbReference>
<dbReference type="FunFam" id="3.40.50.1370:FF:000001">
    <property type="entry name" value="Aspartate carbamoyltransferase"/>
    <property type="match status" value="1"/>
</dbReference>
<dbReference type="FunFam" id="3.40.50.1370:FF:000011">
    <property type="entry name" value="Aspartate carbamoyltransferase"/>
    <property type="match status" value="1"/>
</dbReference>
<dbReference type="Gene3D" id="3.40.50.1370">
    <property type="entry name" value="Aspartate/ornithine carbamoyltransferase"/>
    <property type="match status" value="2"/>
</dbReference>
<dbReference type="HAMAP" id="MF_00001">
    <property type="entry name" value="Asp_carb_tr"/>
    <property type="match status" value="1"/>
</dbReference>
<dbReference type="InterPro" id="IPR006132">
    <property type="entry name" value="Asp/Orn_carbamoyltranf_P-bd"/>
</dbReference>
<dbReference type="InterPro" id="IPR006130">
    <property type="entry name" value="Asp/Orn_carbamoylTrfase"/>
</dbReference>
<dbReference type="InterPro" id="IPR036901">
    <property type="entry name" value="Asp/Orn_carbamoylTrfase_sf"/>
</dbReference>
<dbReference type="InterPro" id="IPR002082">
    <property type="entry name" value="Asp_carbamoyltransf"/>
</dbReference>
<dbReference type="InterPro" id="IPR006131">
    <property type="entry name" value="Asp_carbamoyltransf_Asp/Orn-bd"/>
</dbReference>
<dbReference type="NCBIfam" id="TIGR00670">
    <property type="entry name" value="asp_carb_tr"/>
    <property type="match status" value="1"/>
</dbReference>
<dbReference type="NCBIfam" id="NF002032">
    <property type="entry name" value="PRK00856.1"/>
    <property type="match status" value="1"/>
</dbReference>
<dbReference type="PANTHER" id="PTHR45753:SF6">
    <property type="entry name" value="ASPARTATE CARBAMOYLTRANSFERASE"/>
    <property type="match status" value="1"/>
</dbReference>
<dbReference type="PANTHER" id="PTHR45753">
    <property type="entry name" value="ORNITHINE CARBAMOYLTRANSFERASE, MITOCHONDRIAL"/>
    <property type="match status" value="1"/>
</dbReference>
<dbReference type="Pfam" id="PF00185">
    <property type="entry name" value="OTCace"/>
    <property type="match status" value="1"/>
</dbReference>
<dbReference type="Pfam" id="PF02729">
    <property type="entry name" value="OTCace_N"/>
    <property type="match status" value="1"/>
</dbReference>
<dbReference type="PRINTS" id="PR00100">
    <property type="entry name" value="AOTCASE"/>
</dbReference>
<dbReference type="PRINTS" id="PR00101">
    <property type="entry name" value="ATCASE"/>
</dbReference>
<dbReference type="SUPFAM" id="SSF53671">
    <property type="entry name" value="Aspartate/ornithine carbamoyltransferase"/>
    <property type="match status" value="1"/>
</dbReference>
<dbReference type="PROSITE" id="PS00097">
    <property type="entry name" value="CARBAMOYLTRANSFERASE"/>
    <property type="match status" value="1"/>
</dbReference>
<name>PYRB_BACCR</name>